<evidence type="ECO:0000250" key="1"/>
<evidence type="ECO:0000250" key="2">
    <source>
        <dbReference type="UniProtKB" id="P05204"/>
    </source>
</evidence>
<evidence type="ECO:0000256" key="3">
    <source>
        <dbReference type="SAM" id="MobiDB-lite"/>
    </source>
</evidence>
<evidence type="ECO:0000269" key="4">
    <source>
    </source>
</evidence>
<evidence type="ECO:0000305" key="5"/>
<proteinExistence type="evidence at protein level"/>
<feature type="initiator methionine" description="Removed" evidence="4">
    <location>
        <position position="1"/>
    </location>
</feature>
<feature type="chain" id="PRO_0000206699" description="Non-histone chromosomal protein HMG-17">
    <location>
        <begin position="2"/>
        <end position="90"/>
    </location>
</feature>
<feature type="region of interest" description="Disordered" evidence="3">
    <location>
        <begin position="1"/>
        <end position="90"/>
    </location>
</feature>
<feature type="compositionally biased region" description="Basic and acidic residues" evidence="3">
    <location>
        <begin position="1"/>
        <end position="23"/>
    </location>
</feature>
<feature type="compositionally biased region" description="Basic and acidic residues" evidence="3">
    <location>
        <begin position="37"/>
        <end position="64"/>
    </location>
</feature>
<feature type="compositionally biased region" description="Basic and acidic residues" evidence="3">
    <location>
        <begin position="73"/>
        <end position="90"/>
    </location>
</feature>
<feature type="modified residue" description="Phosphoserine" evidence="2">
    <location>
        <position position="25"/>
    </location>
</feature>
<feature type="modified residue" description="ADP-ribosylserine; alternate" evidence="2">
    <location>
        <position position="29"/>
    </location>
</feature>
<feature type="modified residue" description="Phosphoserine; alternate" evidence="2">
    <location>
        <position position="29"/>
    </location>
</feature>
<feature type="modified residue" description="N6-acetyllysine; alternate" evidence="2">
    <location>
        <position position="82"/>
    </location>
</feature>
<feature type="cross-link" description="Glycyl lysine isopeptide (Lys-Gly) (interchain with G-Cter in SUMO2); alternate" evidence="2">
    <location>
        <position position="82"/>
    </location>
</feature>
<keyword id="KW-0007">Acetylation</keyword>
<keyword id="KW-0013">ADP-ribosylation</keyword>
<keyword id="KW-0963">Cytoplasm</keyword>
<keyword id="KW-0903">Direct protein sequencing</keyword>
<keyword id="KW-0238">DNA-binding</keyword>
<keyword id="KW-1017">Isopeptide bond</keyword>
<keyword id="KW-0539">Nucleus</keyword>
<keyword id="KW-0597">Phosphoprotein</keyword>
<keyword id="KW-1185">Reference proteome</keyword>
<keyword id="KW-0832">Ubl conjugation</keyword>
<name>HMGN2_PIG</name>
<gene>
    <name type="primary">HMGN2</name>
    <name type="synonym">HMG17</name>
</gene>
<sequence length="90" mass="9379">MPKRKAEGDAKGDKAKVKDEPQRRSARLSAKPAPPKPEPKPKKAPAKKGEKVPKGKKGKADAGKDGNNPAENGDAKTDQAQKAEGAGDAK</sequence>
<dbReference type="PIR" id="S33866">
    <property type="entry name" value="S33866"/>
</dbReference>
<dbReference type="RefSeq" id="NP_001231041.1">
    <property type="nucleotide sequence ID" value="NM_001244112.1"/>
</dbReference>
<dbReference type="RefSeq" id="NP_001231043.1">
    <property type="nucleotide sequence ID" value="NM_001244114.1"/>
</dbReference>
<dbReference type="FunCoup" id="P80272">
    <property type="interactions" value="817"/>
</dbReference>
<dbReference type="STRING" id="9823.ENSSSCP00000024716"/>
<dbReference type="PaxDb" id="9823-ENSSSCP00000003858"/>
<dbReference type="PeptideAtlas" id="P80272"/>
<dbReference type="Ensembl" id="ENSSSCT00070050262.1">
    <property type="protein sequence ID" value="ENSSSCP00070042470.1"/>
    <property type="gene ID" value="ENSSSCG00070025139.1"/>
</dbReference>
<dbReference type="Ensembl" id="ENSSSCT00105053200">
    <property type="protein sequence ID" value="ENSSSCP00105037394"/>
    <property type="gene ID" value="ENSSSCG00105027997"/>
</dbReference>
<dbReference type="Ensembl" id="ENSSSCT00115027948">
    <property type="protein sequence ID" value="ENSSSCP00115026502"/>
    <property type="gene ID" value="ENSSSCG00115015978"/>
</dbReference>
<dbReference type="GeneID" id="100524500"/>
<dbReference type="KEGG" id="ssc:100524500"/>
<dbReference type="CTD" id="3151"/>
<dbReference type="eggNOG" id="ENOG502S5FK">
    <property type="taxonomic scope" value="Eukaryota"/>
</dbReference>
<dbReference type="HOGENOM" id="CLU_141985_0_2_1"/>
<dbReference type="InParanoid" id="P80272"/>
<dbReference type="OMA" id="SEQQHCR"/>
<dbReference type="Proteomes" id="UP000008227">
    <property type="component" value="Unplaced"/>
</dbReference>
<dbReference type="Proteomes" id="UP000314985">
    <property type="component" value="Chromosome 6"/>
</dbReference>
<dbReference type="Proteomes" id="UP000694570">
    <property type="component" value="Unplaced"/>
</dbReference>
<dbReference type="Proteomes" id="UP000694571">
    <property type="component" value="Unplaced"/>
</dbReference>
<dbReference type="Proteomes" id="UP000694720">
    <property type="component" value="Unplaced"/>
</dbReference>
<dbReference type="Proteomes" id="UP000694722">
    <property type="component" value="Unplaced"/>
</dbReference>
<dbReference type="Proteomes" id="UP000694723">
    <property type="component" value="Unplaced"/>
</dbReference>
<dbReference type="Proteomes" id="UP000694724">
    <property type="component" value="Unplaced"/>
</dbReference>
<dbReference type="Proteomes" id="UP000694725">
    <property type="component" value="Unplaced"/>
</dbReference>
<dbReference type="Proteomes" id="UP000694726">
    <property type="component" value="Unplaced"/>
</dbReference>
<dbReference type="Proteomes" id="UP000694727">
    <property type="component" value="Unplaced"/>
</dbReference>
<dbReference type="Proteomes" id="UP000694728">
    <property type="component" value="Unplaced"/>
</dbReference>
<dbReference type="GO" id="GO:0000785">
    <property type="term" value="C:chromatin"/>
    <property type="evidence" value="ECO:0007669"/>
    <property type="project" value="InterPro"/>
</dbReference>
<dbReference type="GO" id="GO:0005737">
    <property type="term" value="C:cytoplasm"/>
    <property type="evidence" value="ECO:0007669"/>
    <property type="project" value="UniProtKB-SubCell"/>
</dbReference>
<dbReference type="GO" id="GO:0005634">
    <property type="term" value="C:nucleus"/>
    <property type="evidence" value="ECO:0000318"/>
    <property type="project" value="GO_Central"/>
</dbReference>
<dbReference type="GO" id="GO:0003682">
    <property type="term" value="F:chromatin binding"/>
    <property type="evidence" value="ECO:0000318"/>
    <property type="project" value="GO_Central"/>
</dbReference>
<dbReference type="GO" id="GO:0031492">
    <property type="term" value="F:nucleosomal DNA binding"/>
    <property type="evidence" value="ECO:0007669"/>
    <property type="project" value="InterPro"/>
</dbReference>
<dbReference type="GO" id="GO:0006325">
    <property type="term" value="P:chromatin organization"/>
    <property type="evidence" value="ECO:0000318"/>
    <property type="project" value="GO_Central"/>
</dbReference>
<dbReference type="InterPro" id="IPR000079">
    <property type="entry name" value="HMGN_fam"/>
</dbReference>
<dbReference type="PANTHER" id="PTHR23087:SF13">
    <property type="entry name" value="NON-HISTONE CHROMOSOMAL PROTEIN HMG-17"/>
    <property type="match status" value="1"/>
</dbReference>
<dbReference type="PANTHER" id="PTHR23087">
    <property type="entry name" value="NONHISTONE CHROMOSOMAL PROTEIN HMG"/>
    <property type="match status" value="1"/>
</dbReference>
<dbReference type="Pfam" id="PF01101">
    <property type="entry name" value="HMG14_17"/>
    <property type="match status" value="1"/>
</dbReference>
<dbReference type="PRINTS" id="PR00925">
    <property type="entry name" value="NONHISHMG17"/>
</dbReference>
<dbReference type="SMART" id="SM00527">
    <property type="entry name" value="HMG17"/>
    <property type="match status" value="1"/>
</dbReference>
<dbReference type="PROSITE" id="PS00355">
    <property type="entry name" value="HMG14_17"/>
    <property type="match status" value="1"/>
</dbReference>
<organism>
    <name type="scientific">Sus scrofa</name>
    <name type="common">Pig</name>
    <dbReference type="NCBI Taxonomy" id="9823"/>
    <lineage>
        <taxon>Eukaryota</taxon>
        <taxon>Metazoa</taxon>
        <taxon>Chordata</taxon>
        <taxon>Craniata</taxon>
        <taxon>Vertebrata</taxon>
        <taxon>Euteleostomi</taxon>
        <taxon>Mammalia</taxon>
        <taxon>Eutheria</taxon>
        <taxon>Laurasiatheria</taxon>
        <taxon>Artiodactyla</taxon>
        <taxon>Suina</taxon>
        <taxon>Suidae</taxon>
        <taxon>Sus</taxon>
    </lineage>
</organism>
<reference key="1">
    <citation type="journal article" date="1993" name="Arch. Biochem. Biophys.">
        <title>Isolation by a new method and sequence analysis of chromosomal HMG-17 protein from porcine thymus.</title>
        <authorList>
            <person name="Boumba V.A."/>
            <person name="Tsolas O."/>
            <person name="Choli-Papadopoulou D."/>
            <person name="Seferiadis K."/>
        </authorList>
    </citation>
    <scope>PROTEIN SEQUENCE OF 2-90</scope>
    <source>
        <tissue>Thymus</tissue>
    </source>
</reference>
<accession>P80272</accession>
<protein>
    <recommendedName>
        <fullName>Non-histone chromosomal protein HMG-17</fullName>
    </recommendedName>
    <alternativeName>
        <fullName>High mobility group nucleosome-binding domain-containing protein 2</fullName>
    </alternativeName>
</protein>
<comment type="function">
    <text evidence="1">Binds to the inner side of the nucleosomal DNA thus altering the interaction between the DNA and the histone octamer. May be involved in the process which maintains transcribable genes in a unique chromatin conformation (By similarity).</text>
</comment>
<comment type="subcellular location">
    <subcellularLocation>
        <location evidence="1">Nucleus</location>
    </subcellularLocation>
    <subcellularLocation>
        <location evidence="1">Cytoplasm</location>
    </subcellularLocation>
    <text evidence="1">Cytoplasmic enrichment upon phosphorylation.</text>
</comment>
<comment type="PTM">
    <text evidence="1">Phosphorylation favors cytoplasmic localization.</text>
</comment>
<comment type="similarity">
    <text evidence="5">Belongs to the HMGN family.</text>
</comment>